<organism>
    <name type="scientific">Geobacillus stearothermophilus</name>
    <name type="common">Bacillus stearothermophilus</name>
    <dbReference type="NCBI Taxonomy" id="1422"/>
    <lineage>
        <taxon>Bacteria</taxon>
        <taxon>Bacillati</taxon>
        <taxon>Bacillota</taxon>
        <taxon>Bacilli</taxon>
        <taxon>Bacillales</taxon>
        <taxon>Anoxybacillaceae</taxon>
        <taxon>Geobacillus</taxon>
    </lineage>
</organism>
<accession>P42015</accession>
<protein>
    <recommendedName>
        <fullName evidence="1">PTS system glucose-specific EIICBA component</fullName>
        <ecNumber evidence="1">2.7.1.199</ecNumber>
    </recommendedName>
    <alternativeName>
        <fullName>EII-Glc/EIII-Glc</fullName>
    </alternativeName>
    <alternativeName>
        <fullName evidence="1">EIICBA-Glc</fullName>
    </alternativeName>
    <alternativeName>
        <fullName evidence="6">EIICBA-Glc 1</fullName>
    </alternativeName>
    <domain>
        <recommendedName>
            <fullName evidence="1">Glucose permease IIC component</fullName>
        </recommendedName>
        <alternativeName>
            <fullName evidence="1">PTS system glucose-specific EIIC component</fullName>
        </alternativeName>
    </domain>
    <domain>
        <recommendedName>
            <fullName evidence="1">Glucose-specific phosphotransferase enzyme IIB component</fullName>
        </recommendedName>
        <alternativeName>
            <fullName evidence="1">PTS system glucose-specific EIIB component</fullName>
        </alternativeName>
    </domain>
    <domain>
        <recommendedName>
            <fullName evidence="1">Glucose-specific phosphotransferase enzyme IIA component</fullName>
        </recommendedName>
        <alternativeName>
            <fullName evidence="1">PTS system glucose-specific EIIA component</fullName>
        </alternativeName>
    </domain>
</protein>
<evidence type="ECO:0000250" key="1">
    <source>
        <dbReference type="UniProtKB" id="Q57071"/>
    </source>
</evidence>
<evidence type="ECO:0000255" key="2">
    <source>
        <dbReference type="PROSITE-ProRule" id="PRU00416"/>
    </source>
</evidence>
<evidence type="ECO:0000255" key="3">
    <source>
        <dbReference type="PROSITE-ProRule" id="PRU00421"/>
    </source>
</evidence>
<evidence type="ECO:0000255" key="4">
    <source>
        <dbReference type="PROSITE-ProRule" id="PRU00426"/>
    </source>
</evidence>
<evidence type="ECO:0000256" key="5">
    <source>
        <dbReference type="SAM" id="MobiDB-lite"/>
    </source>
</evidence>
<evidence type="ECO:0000305" key="6"/>
<dbReference type="EC" id="2.7.1.199" evidence="1"/>
<dbReference type="EMBL" id="U12340">
    <property type="protein sequence ID" value="AAA86047.1"/>
    <property type="molecule type" value="Genomic_DNA"/>
</dbReference>
<dbReference type="SMR" id="P42015"/>
<dbReference type="GO" id="GO:0005886">
    <property type="term" value="C:plasma membrane"/>
    <property type="evidence" value="ECO:0007669"/>
    <property type="project" value="UniProtKB-SubCell"/>
</dbReference>
<dbReference type="GO" id="GO:0016301">
    <property type="term" value="F:kinase activity"/>
    <property type="evidence" value="ECO:0007669"/>
    <property type="project" value="UniProtKB-KW"/>
</dbReference>
<dbReference type="GO" id="GO:0008982">
    <property type="term" value="F:protein-N(PI)-phosphohistidine-sugar phosphotransferase activity"/>
    <property type="evidence" value="ECO:0007669"/>
    <property type="project" value="InterPro"/>
</dbReference>
<dbReference type="GO" id="GO:0009401">
    <property type="term" value="P:phosphoenolpyruvate-dependent sugar phosphotransferase system"/>
    <property type="evidence" value="ECO:0007669"/>
    <property type="project" value="UniProtKB-KW"/>
</dbReference>
<dbReference type="CDD" id="cd00210">
    <property type="entry name" value="PTS_IIA_glc"/>
    <property type="match status" value="1"/>
</dbReference>
<dbReference type="CDD" id="cd00212">
    <property type="entry name" value="PTS_IIB_glc"/>
    <property type="match status" value="1"/>
</dbReference>
<dbReference type="FunFam" id="2.70.70.10:FF:000001">
    <property type="entry name" value="PTS system glucose-specific IIA component"/>
    <property type="match status" value="1"/>
</dbReference>
<dbReference type="FunFam" id="3.30.1360.60:FF:000001">
    <property type="entry name" value="PTS system glucose-specific IIBC component PtsG"/>
    <property type="match status" value="1"/>
</dbReference>
<dbReference type="Gene3D" id="2.70.70.10">
    <property type="entry name" value="Glucose Permease (Domain IIA)"/>
    <property type="match status" value="1"/>
</dbReference>
<dbReference type="Gene3D" id="3.30.1360.60">
    <property type="entry name" value="Glucose permease domain IIB"/>
    <property type="match status" value="1"/>
</dbReference>
<dbReference type="InterPro" id="IPR011055">
    <property type="entry name" value="Dup_hybrid_motif"/>
</dbReference>
<dbReference type="InterPro" id="IPR036878">
    <property type="entry name" value="Glu_permease_IIB"/>
</dbReference>
<dbReference type="InterPro" id="IPR018113">
    <property type="entry name" value="PTrfase_EIIB_Cys"/>
</dbReference>
<dbReference type="InterPro" id="IPR001127">
    <property type="entry name" value="PTS_EIIA_1_perm"/>
</dbReference>
<dbReference type="InterPro" id="IPR050890">
    <property type="entry name" value="PTS_EIIA_component"/>
</dbReference>
<dbReference type="InterPro" id="IPR001996">
    <property type="entry name" value="PTS_IIB_1"/>
</dbReference>
<dbReference type="NCBIfam" id="TIGR00826">
    <property type="entry name" value="EIIB_glc"/>
    <property type="match status" value="1"/>
</dbReference>
<dbReference type="NCBIfam" id="TIGR00830">
    <property type="entry name" value="PTBA"/>
    <property type="match status" value="1"/>
</dbReference>
<dbReference type="PANTHER" id="PTHR45008">
    <property type="entry name" value="PTS SYSTEM GLUCOSE-SPECIFIC EIIA COMPONENT"/>
    <property type="match status" value="1"/>
</dbReference>
<dbReference type="PANTHER" id="PTHR45008:SF1">
    <property type="entry name" value="PTS SYSTEM GLUCOSE-SPECIFIC EIIA COMPONENT"/>
    <property type="match status" value="1"/>
</dbReference>
<dbReference type="Pfam" id="PF00358">
    <property type="entry name" value="PTS_EIIA_1"/>
    <property type="match status" value="1"/>
</dbReference>
<dbReference type="Pfam" id="PF00367">
    <property type="entry name" value="PTS_EIIB"/>
    <property type="match status" value="1"/>
</dbReference>
<dbReference type="SUPFAM" id="SSF51261">
    <property type="entry name" value="Duplicated hybrid motif"/>
    <property type="match status" value="1"/>
</dbReference>
<dbReference type="SUPFAM" id="SSF55604">
    <property type="entry name" value="Glucose permease domain IIB"/>
    <property type="match status" value="1"/>
</dbReference>
<dbReference type="PROSITE" id="PS51093">
    <property type="entry name" value="PTS_EIIA_TYPE_1"/>
    <property type="match status" value="1"/>
</dbReference>
<dbReference type="PROSITE" id="PS00371">
    <property type="entry name" value="PTS_EIIA_TYPE_1_HIS"/>
    <property type="match status" value="1"/>
</dbReference>
<dbReference type="PROSITE" id="PS51098">
    <property type="entry name" value="PTS_EIIB_TYPE_1"/>
    <property type="match status" value="1"/>
</dbReference>
<dbReference type="PROSITE" id="PS01035">
    <property type="entry name" value="PTS_EIIB_TYPE_1_CYS"/>
    <property type="match status" value="1"/>
</dbReference>
<proteinExistence type="inferred from homology"/>
<comment type="function">
    <text evidence="1">The phosphoenolpyruvate-dependent sugar phosphotransferase system (sugar PTS), a major carbohydrate active transport system, catalyzes the phosphorylation of incoming sugar substrates concomitantly with their translocation across the cell membrane. This system is involved in glucose transport (By similarity).</text>
</comment>
<comment type="catalytic activity">
    <reaction evidence="1">
        <text>N(pros)-phospho-L-histidyl-[protein] + D-glucose(out) = D-glucose 6-phosphate(in) + L-histidyl-[protein]</text>
        <dbReference type="Rhea" id="RHEA:33367"/>
        <dbReference type="Rhea" id="RHEA-COMP:9745"/>
        <dbReference type="Rhea" id="RHEA-COMP:9746"/>
        <dbReference type="ChEBI" id="CHEBI:4167"/>
        <dbReference type="ChEBI" id="CHEBI:29979"/>
        <dbReference type="ChEBI" id="CHEBI:61548"/>
        <dbReference type="ChEBI" id="CHEBI:64837"/>
        <dbReference type="EC" id="2.7.1.199"/>
    </reaction>
</comment>
<comment type="subcellular location">
    <subcellularLocation>
        <location evidence="4">Cell membrane</location>
        <topology evidence="4">Multi-pass membrane protein</topology>
    </subcellularLocation>
</comment>
<comment type="domain">
    <text evidence="4">The EIIC domain forms the PTS system translocation channel and contains the specific substrate-binding site.</text>
</comment>
<comment type="domain">
    <text evidence="3">The EIIB domain is phosphorylated by phospho-EIIA on a cysteinyl or histidyl residue, depending on the transported sugar. Then, it transfers the phosphoryl group to the sugar substrate concomitantly with the sugar uptake processed by the EIIC domain.</text>
</comment>
<comment type="domain">
    <text evidence="2">The EIIA domain is phosphorylated by phospho-HPr on a histidyl residue. Then, it transfers the phosphoryl group to the EIIB domain.</text>
</comment>
<sequence length="324" mass="34674">HLLNVKIGMTFSGGVIDFLLFGVLPNRTAWWLVIPVGLVFAVIYYFGFRFAIRKWDLATPGREKTVEEAPKAEAAAAGDLPYEVLAALGGKENIEHLDACITRLRVSVHDIGRVDKDRLKALGAAGVLEVGNNVQAIFGPKSDMLKGQIQDIMQGKAPARAEEKPKTAASEAAESETIASPMSGEIVPLAEVPDQVFSQKMMGDGFAVMPTDGTVVSPVDGKIINVFPTKHAIGIQSAGGHEILIHVGIDTVKLNGQGFEALVKEGDEVKKGQPILRVDLDYVKQNAPSIVTPVIFTNLQAGETVHVNKQGPVARGEDAVVTIR</sequence>
<feature type="chain" id="PRO_0000186556" description="PTS system glucose-specific EIICBA component">
    <location>
        <begin position="1" status="less than"/>
        <end position="324"/>
    </location>
</feature>
<feature type="transmembrane region" description="Helical" evidence="4">
    <location>
        <begin position="5"/>
        <end position="25"/>
    </location>
</feature>
<feature type="transmembrane region" description="Helical" evidence="4">
    <location>
        <begin position="28"/>
        <end position="48"/>
    </location>
</feature>
<feature type="domain" description="PTS EIIC type-1" evidence="4">
    <location>
        <begin position="1" status="less than"/>
        <end position="63"/>
    </location>
</feature>
<feature type="domain" description="PTS EIIB type-1" evidence="3">
    <location>
        <begin position="78"/>
        <end position="159"/>
    </location>
</feature>
<feature type="domain" description="PTS EIIA type-1" evidence="2">
    <location>
        <begin position="194"/>
        <end position="298"/>
    </location>
</feature>
<feature type="region of interest" description="Disordered" evidence="5">
    <location>
        <begin position="156"/>
        <end position="177"/>
    </location>
</feature>
<feature type="compositionally biased region" description="Low complexity" evidence="5">
    <location>
        <begin position="167"/>
        <end position="177"/>
    </location>
</feature>
<feature type="active site" description="Phosphocysteine intermediate; for EIIB activity" evidence="3">
    <location>
        <position position="100"/>
    </location>
</feature>
<feature type="active site" description="Tele-phosphohistidine intermediate; for EIIA activity" evidence="2">
    <location>
        <position position="246"/>
    </location>
</feature>
<feature type="non-terminal residue">
    <location>
        <position position="1"/>
    </location>
</feature>
<gene>
    <name type="primary">ptsG</name>
</gene>
<reference key="1">
    <citation type="journal article" date="1995" name="Microbiology">
        <title>Discovery of a ptsHI operon, which includes a third gene (ptsT), in the thermophile Bacillus stearothermophilus.</title>
        <authorList>
            <person name="Lai X."/>
            <person name="Ingram L.O."/>
        </authorList>
    </citation>
    <scope>NUCLEOTIDE SEQUENCE [GENOMIC DNA]</scope>
    <source>
        <strain>XL-65-6</strain>
    </source>
</reference>
<keyword id="KW-1003">Cell membrane</keyword>
<keyword id="KW-0418">Kinase</keyword>
<keyword id="KW-0472">Membrane</keyword>
<keyword id="KW-0598">Phosphotransferase system</keyword>
<keyword id="KW-0762">Sugar transport</keyword>
<keyword id="KW-0808">Transferase</keyword>
<keyword id="KW-0812">Transmembrane</keyword>
<keyword id="KW-1133">Transmembrane helix</keyword>
<keyword id="KW-0813">Transport</keyword>
<name>PTG3C_GEOSE</name>